<feature type="chain" id="PRO_1000204939" description="RNA pyrophosphohydrolase">
    <location>
        <begin position="1"/>
        <end position="161"/>
    </location>
</feature>
<feature type="domain" description="Nudix hydrolase" evidence="1">
    <location>
        <begin position="12"/>
        <end position="154"/>
    </location>
</feature>
<feature type="short sequence motif" description="Nudix box">
    <location>
        <begin position="46"/>
        <end position="67"/>
    </location>
</feature>
<sequence>MSNSSKKHLDLPYRPGVGMMILNADNHIFVGKRIDTKISAWQMPQGGIVPGETPSIAAMREMLEEIGSDKGYIIAESKFWYSYDVPSFLIPKLWNGNFRGQKQRWFLIRFTGNNEDININTSNPEFDQWRWASLDELLSIIIPFKRKLYQAVVKEFESLIQ</sequence>
<protein>
    <recommendedName>
        <fullName evidence="1">RNA pyrophosphohydrolase</fullName>
        <ecNumber evidence="1">3.6.1.-</ecNumber>
    </recommendedName>
    <alternativeName>
        <fullName evidence="1">(Di)nucleoside polyphosphate hydrolase</fullName>
    </alternativeName>
</protein>
<proteinExistence type="inferred from homology"/>
<reference key="1">
    <citation type="journal article" date="2009" name="PLoS ONE">
        <title>Genome sequence of the endosymbiont Rickettsia peacockii and comparison with virulent Rickettsia rickettsii: identification of virulence factors.</title>
        <authorList>
            <person name="Felsheim R.F."/>
            <person name="Kurtti T.J."/>
            <person name="Munderloh U.G."/>
        </authorList>
    </citation>
    <scope>NUCLEOTIDE SEQUENCE [LARGE SCALE GENOMIC DNA]</scope>
    <source>
        <strain>Rustic</strain>
    </source>
</reference>
<accession>C4K0V5</accession>
<name>RPPH_RICPU</name>
<organism>
    <name type="scientific">Rickettsia peacockii (strain Rustic)</name>
    <dbReference type="NCBI Taxonomy" id="562019"/>
    <lineage>
        <taxon>Bacteria</taxon>
        <taxon>Pseudomonadati</taxon>
        <taxon>Pseudomonadota</taxon>
        <taxon>Alphaproteobacteria</taxon>
        <taxon>Rickettsiales</taxon>
        <taxon>Rickettsiaceae</taxon>
        <taxon>Rickettsieae</taxon>
        <taxon>Rickettsia</taxon>
        <taxon>spotted fever group</taxon>
    </lineage>
</organism>
<dbReference type="EC" id="3.6.1.-" evidence="1"/>
<dbReference type="EMBL" id="CP001227">
    <property type="protein sequence ID" value="ACR47206.1"/>
    <property type="molecule type" value="Genomic_DNA"/>
</dbReference>
<dbReference type="RefSeq" id="WP_004996360.1">
    <property type="nucleotide sequence ID" value="NC_012730.1"/>
</dbReference>
<dbReference type="SMR" id="C4K0V5"/>
<dbReference type="GeneID" id="95362003"/>
<dbReference type="KEGG" id="rpk:RPR_01625"/>
<dbReference type="HOGENOM" id="CLU_087195_3_0_5"/>
<dbReference type="Proteomes" id="UP000005015">
    <property type="component" value="Chromosome"/>
</dbReference>
<dbReference type="GO" id="GO:0005737">
    <property type="term" value="C:cytoplasm"/>
    <property type="evidence" value="ECO:0007669"/>
    <property type="project" value="TreeGrafter"/>
</dbReference>
<dbReference type="GO" id="GO:0046872">
    <property type="term" value="F:metal ion binding"/>
    <property type="evidence" value="ECO:0007669"/>
    <property type="project" value="UniProtKB-KW"/>
</dbReference>
<dbReference type="GO" id="GO:0034353">
    <property type="term" value="F:mRNA 5'-diphosphatase activity"/>
    <property type="evidence" value="ECO:0007669"/>
    <property type="project" value="TreeGrafter"/>
</dbReference>
<dbReference type="GO" id="GO:0006402">
    <property type="term" value="P:mRNA catabolic process"/>
    <property type="evidence" value="ECO:0007669"/>
    <property type="project" value="TreeGrafter"/>
</dbReference>
<dbReference type="CDD" id="cd03671">
    <property type="entry name" value="NUDIX_Ap4A_hydrolase_plant_like"/>
    <property type="match status" value="1"/>
</dbReference>
<dbReference type="Gene3D" id="3.90.79.10">
    <property type="entry name" value="Nucleoside Triphosphate Pyrophosphohydrolase"/>
    <property type="match status" value="1"/>
</dbReference>
<dbReference type="HAMAP" id="MF_00298">
    <property type="entry name" value="Nudix_RppH"/>
    <property type="match status" value="1"/>
</dbReference>
<dbReference type="InterPro" id="IPR015797">
    <property type="entry name" value="NUDIX_hydrolase-like_dom_sf"/>
</dbReference>
<dbReference type="InterPro" id="IPR020084">
    <property type="entry name" value="NUDIX_hydrolase_CS"/>
</dbReference>
<dbReference type="InterPro" id="IPR000086">
    <property type="entry name" value="NUDIX_hydrolase_dom"/>
</dbReference>
<dbReference type="InterPro" id="IPR022927">
    <property type="entry name" value="RppH"/>
</dbReference>
<dbReference type="NCBIfam" id="NF001936">
    <property type="entry name" value="PRK00714.1-3"/>
    <property type="match status" value="1"/>
</dbReference>
<dbReference type="NCBIfam" id="NF001938">
    <property type="entry name" value="PRK00714.1-5"/>
    <property type="match status" value="1"/>
</dbReference>
<dbReference type="PANTHER" id="PTHR23114">
    <property type="entry name" value="M7GPPPN-MRNA HYDROLASE"/>
    <property type="match status" value="1"/>
</dbReference>
<dbReference type="PANTHER" id="PTHR23114:SF17">
    <property type="entry name" value="M7GPPPN-MRNA HYDROLASE"/>
    <property type="match status" value="1"/>
</dbReference>
<dbReference type="Pfam" id="PF00293">
    <property type="entry name" value="NUDIX"/>
    <property type="match status" value="1"/>
</dbReference>
<dbReference type="SUPFAM" id="SSF55811">
    <property type="entry name" value="Nudix"/>
    <property type="match status" value="1"/>
</dbReference>
<dbReference type="PROSITE" id="PS51462">
    <property type="entry name" value="NUDIX"/>
    <property type="match status" value="1"/>
</dbReference>
<dbReference type="PROSITE" id="PS00893">
    <property type="entry name" value="NUDIX_BOX"/>
    <property type="match status" value="1"/>
</dbReference>
<keyword id="KW-0378">Hydrolase</keyword>
<keyword id="KW-0479">Metal-binding</keyword>
<evidence type="ECO:0000255" key="1">
    <source>
        <dbReference type="HAMAP-Rule" id="MF_00298"/>
    </source>
</evidence>
<gene>
    <name evidence="1" type="primary">rppH</name>
    <name evidence="1" type="synonym">nudH</name>
    <name type="ordered locus">RPR_01625</name>
</gene>
<comment type="function">
    <text evidence="1">Accelerates the degradation of transcripts by removing pyrophosphate from the 5'-end of triphosphorylated RNA, leading to a more labile monophosphorylated state that can stimulate subsequent ribonuclease cleavage.</text>
</comment>
<comment type="cofactor">
    <cofactor evidence="1">
        <name>a divalent metal cation</name>
        <dbReference type="ChEBI" id="CHEBI:60240"/>
    </cofactor>
</comment>
<comment type="similarity">
    <text evidence="1">Belongs to the Nudix hydrolase family. RppH subfamily.</text>
</comment>